<proteinExistence type="predicted"/>
<feature type="chain" id="PRO_0000202495" description="Uncharacterized protein YBR144C">
    <location>
        <begin position="1"/>
        <end position="104"/>
    </location>
</feature>
<gene>
    <name type="ordered locus">YBR144C</name>
    <name type="ORF">YBR1121</name>
</gene>
<organism>
    <name type="scientific">Saccharomyces cerevisiae (strain ATCC 204508 / S288c)</name>
    <name type="common">Baker's yeast</name>
    <dbReference type="NCBI Taxonomy" id="559292"/>
    <lineage>
        <taxon>Eukaryota</taxon>
        <taxon>Fungi</taxon>
        <taxon>Dikarya</taxon>
        <taxon>Ascomycota</taxon>
        <taxon>Saccharomycotina</taxon>
        <taxon>Saccharomycetes</taxon>
        <taxon>Saccharomycetales</taxon>
        <taxon>Saccharomycetaceae</taxon>
        <taxon>Saccharomyces</taxon>
    </lineage>
</organism>
<name>YBZ4_YEAST</name>
<keyword id="KW-1185">Reference proteome</keyword>
<reference key="1">
    <citation type="journal article" date="1993" name="Yeast">
        <title>Sequence and function analysis of a 2.73 kb fragment of Saccharomyces cerevisiae chromosome II.</title>
        <authorList>
            <person name="Miosga T."/>
            <person name="Zimmermann F.K."/>
        </authorList>
    </citation>
    <scope>NUCLEOTIDE SEQUENCE [GENOMIC DNA]</scope>
    <source>
        <strain>ATCC 200060 / W303</strain>
    </source>
</reference>
<reference key="2">
    <citation type="journal article" date="1994" name="EMBO J.">
        <title>Complete DNA sequence of yeast chromosome II.</title>
        <authorList>
            <person name="Feldmann H."/>
            <person name="Aigle M."/>
            <person name="Aljinovic G."/>
            <person name="Andre B."/>
            <person name="Baclet M.C."/>
            <person name="Barthe C."/>
            <person name="Baur A."/>
            <person name="Becam A.-M."/>
            <person name="Biteau N."/>
            <person name="Boles E."/>
            <person name="Brandt T."/>
            <person name="Brendel M."/>
            <person name="Brueckner M."/>
            <person name="Bussereau F."/>
            <person name="Christiansen C."/>
            <person name="Contreras R."/>
            <person name="Crouzet M."/>
            <person name="Cziepluch C."/>
            <person name="Demolis N."/>
            <person name="Delaveau T."/>
            <person name="Doignon F."/>
            <person name="Domdey H."/>
            <person name="Duesterhus S."/>
            <person name="Dubois E."/>
            <person name="Dujon B."/>
            <person name="El Bakkoury M."/>
            <person name="Entian K.-D."/>
            <person name="Feuermann M."/>
            <person name="Fiers W."/>
            <person name="Fobo G.M."/>
            <person name="Fritz C."/>
            <person name="Gassenhuber J."/>
            <person name="Glansdorff N."/>
            <person name="Goffeau A."/>
            <person name="Grivell L.A."/>
            <person name="de Haan M."/>
            <person name="Hein C."/>
            <person name="Herbert C.J."/>
            <person name="Hollenberg C.P."/>
            <person name="Holmstroem K."/>
            <person name="Jacq C."/>
            <person name="Jacquet M."/>
            <person name="Jauniaux J.-C."/>
            <person name="Jonniaux J.-L."/>
            <person name="Kallesoee T."/>
            <person name="Kiesau P."/>
            <person name="Kirchrath L."/>
            <person name="Koetter P."/>
            <person name="Korol S."/>
            <person name="Liebl S."/>
            <person name="Logghe M."/>
            <person name="Lohan A.J.E."/>
            <person name="Louis E.J."/>
            <person name="Li Z.Y."/>
            <person name="Maat M.J."/>
            <person name="Mallet L."/>
            <person name="Mannhaupt G."/>
            <person name="Messenguy F."/>
            <person name="Miosga T."/>
            <person name="Molemans F."/>
            <person name="Mueller S."/>
            <person name="Nasr F."/>
            <person name="Obermaier B."/>
            <person name="Perea J."/>
            <person name="Pierard A."/>
            <person name="Piravandi E."/>
            <person name="Pohl F.M."/>
            <person name="Pohl T.M."/>
            <person name="Potier S."/>
            <person name="Proft M."/>
            <person name="Purnelle B."/>
            <person name="Ramezani Rad M."/>
            <person name="Rieger M."/>
            <person name="Rose M."/>
            <person name="Schaaff-Gerstenschlaeger I."/>
            <person name="Scherens B."/>
            <person name="Schwarzlose C."/>
            <person name="Skala J."/>
            <person name="Slonimski P.P."/>
            <person name="Smits P.H.M."/>
            <person name="Souciet J.-L."/>
            <person name="Steensma H.Y."/>
            <person name="Stucka R."/>
            <person name="Urrestarazu L.A."/>
            <person name="van der Aart Q.J.M."/>
            <person name="Van Dyck L."/>
            <person name="Vassarotti A."/>
            <person name="Vetter I."/>
            <person name="Vierendeels F."/>
            <person name="Vissers S."/>
            <person name="Wagner G."/>
            <person name="de Wergifosse P."/>
            <person name="Wolfe K.H."/>
            <person name="Zagulski M."/>
            <person name="Zimmermann F.K."/>
            <person name="Mewes H.-W."/>
            <person name="Kleine K."/>
        </authorList>
    </citation>
    <scope>NUCLEOTIDE SEQUENCE [LARGE SCALE GENOMIC DNA]</scope>
    <source>
        <strain>ATCC 204508 / S288c</strain>
    </source>
</reference>
<reference key="3">
    <citation type="journal article" date="2014" name="G3 (Bethesda)">
        <title>The reference genome sequence of Saccharomyces cerevisiae: Then and now.</title>
        <authorList>
            <person name="Engel S.R."/>
            <person name="Dietrich F.S."/>
            <person name="Fisk D.G."/>
            <person name="Binkley G."/>
            <person name="Balakrishnan R."/>
            <person name="Costanzo M.C."/>
            <person name="Dwight S.S."/>
            <person name="Hitz B.C."/>
            <person name="Karra K."/>
            <person name="Nash R.S."/>
            <person name="Weng S."/>
            <person name="Wong E.D."/>
            <person name="Lloyd P."/>
            <person name="Skrzypek M.S."/>
            <person name="Miyasato S.R."/>
            <person name="Simison M."/>
            <person name="Cherry J.M."/>
        </authorList>
    </citation>
    <scope>GENOME REANNOTATION</scope>
    <source>
        <strain>ATCC 204508 / S288c</strain>
    </source>
</reference>
<accession>P34215</accession>
<accession>A0A1S0SZZ3</accession>
<sequence length="104" mass="12318">MLFDSSFRERRTFYNAAGSVSVPFYKQIAEQTHDIFKRCNVREHILRPCPVDISHFSRDLNGAPLSYTENIKFTAKFWANAWIDYESVMKTLLVKLYISFFFMC</sequence>
<dbReference type="EMBL" id="X73531">
    <property type="protein sequence ID" value="CAA51934.1"/>
    <property type="molecule type" value="Genomic_DNA"/>
</dbReference>
<dbReference type="EMBL" id="Z36013">
    <property type="protein sequence ID" value="CAA85102.1"/>
    <property type="molecule type" value="Genomic_DNA"/>
</dbReference>
<dbReference type="EMBL" id="BK006936">
    <property type="protein sequence ID" value="DAA80265.1"/>
    <property type="molecule type" value="Genomic_DNA"/>
</dbReference>
<dbReference type="PIR" id="S39108">
    <property type="entry name" value="S39108"/>
</dbReference>
<dbReference type="RefSeq" id="NP_001335745.1">
    <property type="nucleotide sequence ID" value="NM_001348890.1"/>
</dbReference>
<dbReference type="DIP" id="DIP-4501N"/>
<dbReference type="FunCoup" id="P34215">
    <property type="interactions" value="20"/>
</dbReference>
<dbReference type="IntAct" id="P34215">
    <property type="interactions" value="1"/>
</dbReference>
<dbReference type="STRING" id="4932.YBR144C"/>
<dbReference type="GlyGen" id="P34215">
    <property type="glycosylation" value="3 sites, 1 O-linked glycan (3 sites)"/>
</dbReference>
<dbReference type="PaxDb" id="4932-YBR144C"/>
<dbReference type="EnsemblFungi" id="YBR144C_mRNA">
    <property type="protein sequence ID" value="YBR144C"/>
    <property type="gene ID" value="YBR144C"/>
</dbReference>
<dbReference type="GeneID" id="852441"/>
<dbReference type="AGR" id="SGD:S000000348"/>
<dbReference type="SGD" id="S000000348">
    <property type="gene designation" value="YBR144C"/>
</dbReference>
<dbReference type="HOGENOM" id="CLU_2252167_0_0_1"/>
<dbReference type="InParanoid" id="P34215"/>
<dbReference type="PRO" id="PR:P34215"/>
<dbReference type="Proteomes" id="UP000002311">
    <property type="component" value="Chromosome II"/>
</dbReference>
<dbReference type="RNAct" id="P34215">
    <property type="molecule type" value="protein"/>
</dbReference>
<protein>
    <recommendedName>
        <fullName>Uncharacterized protein YBR144C</fullName>
    </recommendedName>
</protein>